<protein>
    <recommendedName>
        <fullName evidence="1">Dihydroorotase</fullName>
        <shortName evidence="1">DHOase</shortName>
        <ecNumber evidence="1">3.5.2.3</ecNumber>
    </recommendedName>
</protein>
<reference key="1">
    <citation type="journal article" date="2008" name="Genomics">
        <title>Characterization of ST-4821 complex, a unique Neisseria meningitidis clone.</title>
        <authorList>
            <person name="Peng J."/>
            <person name="Yang L."/>
            <person name="Yang F."/>
            <person name="Yang J."/>
            <person name="Yan Y."/>
            <person name="Nie H."/>
            <person name="Zhang X."/>
            <person name="Xiong Z."/>
            <person name="Jiang Y."/>
            <person name="Cheng F."/>
            <person name="Xu X."/>
            <person name="Chen S."/>
            <person name="Sun L."/>
            <person name="Li W."/>
            <person name="Shen Y."/>
            <person name="Shao Z."/>
            <person name="Liang X."/>
            <person name="Xu J."/>
            <person name="Jin Q."/>
        </authorList>
    </citation>
    <scope>NUCLEOTIDE SEQUENCE [LARGE SCALE GENOMIC DNA]</scope>
    <source>
        <strain>053442</strain>
    </source>
</reference>
<name>PYRC_NEIM0</name>
<comment type="function">
    <text evidence="1">Catalyzes the reversible cyclization of carbamoyl aspartate to dihydroorotate.</text>
</comment>
<comment type="catalytic activity">
    <reaction evidence="1">
        <text>(S)-dihydroorotate + H2O = N-carbamoyl-L-aspartate + H(+)</text>
        <dbReference type="Rhea" id="RHEA:24296"/>
        <dbReference type="ChEBI" id="CHEBI:15377"/>
        <dbReference type="ChEBI" id="CHEBI:15378"/>
        <dbReference type="ChEBI" id="CHEBI:30864"/>
        <dbReference type="ChEBI" id="CHEBI:32814"/>
        <dbReference type="EC" id="3.5.2.3"/>
    </reaction>
</comment>
<comment type="cofactor">
    <cofactor evidence="1">
        <name>Zn(2+)</name>
        <dbReference type="ChEBI" id="CHEBI:29105"/>
    </cofactor>
    <text evidence="1">Binds 2 Zn(2+) ions per subunit.</text>
</comment>
<comment type="pathway">
    <text evidence="1">Pyrimidine metabolism; UMP biosynthesis via de novo pathway; (S)-dihydroorotate from bicarbonate: step 3/3.</text>
</comment>
<comment type="subunit">
    <text evidence="1">Homodimer.</text>
</comment>
<comment type="similarity">
    <text evidence="1">Belongs to the metallo-dependent hydrolases superfamily. DHOase family. Class II DHOase subfamily.</text>
</comment>
<organism>
    <name type="scientific">Neisseria meningitidis serogroup C (strain 053442)</name>
    <dbReference type="NCBI Taxonomy" id="374833"/>
    <lineage>
        <taxon>Bacteria</taxon>
        <taxon>Pseudomonadati</taxon>
        <taxon>Pseudomonadota</taxon>
        <taxon>Betaproteobacteria</taxon>
        <taxon>Neisseriales</taxon>
        <taxon>Neisseriaceae</taxon>
        <taxon>Neisseria</taxon>
    </lineage>
</organism>
<accession>A9M2W6</accession>
<evidence type="ECO:0000255" key="1">
    <source>
        <dbReference type="HAMAP-Rule" id="MF_00219"/>
    </source>
</evidence>
<keyword id="KW-0378">Hydrolase</keyword>
<keyword id="KW-0479">Metal-binding</keyword>
<keyword id="KW-0665">Pyrimidine biosynthesis</keyword>
<keyword id="KW-0862">Zinc</keyword>
<gene>
    <name evidence="1" type="primary">pyrC</name>
    <name type="ordered locus">NMCC_0639</name>
</gene>
<proteinExistence type="inferred from homology"/>
<dbReference type="EC" id="3.5.2.3" evidence="1"/>
<dbReference type="EMBL" id="CP000381">
    <property type="protein sequence ID" value="ABX72835.1"/>
    <property type="molecule type" value="Genomic_DNA"/>
</dbReference>
<dbReference type="RefSeq" id="WP_012221417.1">
    <property type="nucleotide sequence ID" value="NC_010120.1"/>
</dbReference>
<dbReference type="SMR" id="A9M2W6"/>
<dbReference type="MEROPS" id="M38.A02"/>
<dbReference type="KEGG" id="nmn:NMCC_0639"/>
<dbReference type="HOGENOM" id="CLU_041558_1_0_4"/>
<dbReference type="UniPathway" id="UPA00070">
    <property type="reaction ID" value="UER00117"/>
</dbReference>
<dbReference type="Proteomes" id="UP000001177">
    <property type="component" value="Chromosome"/>
</dbReference>
<dbReference type="GO" id="GO:0005737">
    <property type="term" value="C:cytoplasm"/>
    <property type="evidence" value="ECO:0007669"/>
    <property type="project" value="TreeGrafter"/>
</dbReference>
<dbReference type="GO" id="GO:0004151">
    <property type="term" value="F:dihydroorotase activity"/>
    <property type="evidence" value="ECO:0007669"/>
    <property type="project" value="UniProtKB-UniRule"/>
</dbReference>
<dbReference type="GO" id="GO:0008270">
    <property type="term" value="F:zinc ion binding"/>
    <property type="evidence" value="ECO:0007669"/>
    <property type="project" value="UniProtKB-UniRule"/>
</dbReference>
<dbReference type="GO" id="GO:0006207">
    <property type="term" value="P:'de novo' pyrimidine nucleobase biosynthetic process"/>
    <property type="evidence" value="ECO:0007669"/>
    <property type="project" value="TreeGrafter"/>
</dbReference>
<dbReference type="GO" id="GO:0044205">
    <property type="term" value="P:'de novo' UMP biosynthetic process"/>
    <property type="evidence" value="ECO:0007669"/>
    <property type="project" value="UniProtKB-UniRule"/>
</dbReference>
<dbReference type="CDD" id="cd01294">
    <property type="entry name" value="DHOase"/>
    <property type="match status" value="1"/>
</dbReference>
<dbReference type="FunFam" id="3.20.20.140:FF:000006">
    <property type="entry name" value="Dihydroorotase"/>
    <property type="match status" value="1"/>
</dbReference>
<dbReference type="Gene3D" id="3.20.20.140">
    <property type="entry name" value="Metal-dependent hydrolases"/>
    <property type="match status" value="1"/>
</dbReference>
<dbReference type="HAMAP" id="MF_00219">
    <property type="entry name" value="PyrC_classII"/>
    <property type="match status" value="1"/>
</dbReference>
<dbReference type="InterPro" id="IPR006680">
    <property type="entry name" value="Amidohydro-rel"/>
</dbReference>
<dbReference type="InterPro" id="IPR004721">
    <property type="entry name" value="DHOdimr"/>
</dbReference>
<dbReference type="InterPro" id="IPR002195">
    <property type="entry name" value="Dihydroorotase_CS"/>
</dbReference>
<dbReference type="InterPro" id="IPR032466">
    <property type="entry name" value="Metal_Hydrolase"/>
</dbReference>
<dbReference type="NCBIfam" id="TIGR00856">
    <property type="entry name" value="pyrC_dimer"/>
    <property type="match status" value="1"/>
</dbReference>
<dbReference type="PANTHER" id="PTHR43137">
    <property type="entry name" value="DIHYDROOROTASE"/>
    <property type="match status" value="1"/>
</dbReference>
<dbReference type="PANTHER" id="PTHR43137:SF1">
    <property type="entry name" value="DIHYDROOROTASE"/>
    <property type="match status" value="1"/>
</dbReference>
<dbReference type="Pfam" id="PF01979">
    <property type="entry name" value="Amidohydro_1"/>
    <property type="match status" value="1"/>
</dbReference>
<dbReference type="PIRSF" id="PIRSF001237">
    <property type="entry name" value="DHOdimr"/>
    <property type="match status" value="1"/>
</dbReference>
<dbReference type="SUPFAM" id="SSF51556">
    <property type="entry name" value="Metallo-dependent hydrolases"/>
    <property type="match status" value="1"/>
</dbReference>
<dbReference type="PROSITE" id="PS00482">
    <property type="entry name" value="DIHYDROOROTASE_1"/>
    <property type="match status" value="1"/>
</dbReference>
<dbReference type="PROSITE" id="PS00483">
    <property type="entry name" value="DIHYDROOROTASE_2"/>
    <property type="match status" value="1"/>
</dbReference>
<sequence>MQTLTIIRPDDMHLHLRDGDALKAVVPYTARQMGRAVIMPNLKPPVVSVADALAYKARIMAALPEGSAFEPLMTLYLTDNATSELVREAKAAGIVAFKLYPAGATTNSDSGVTDLFKLIPVLEEMAKQGILFLVHGEVTDPEIDIFDREAAFIGRVMKPVLAQVPNLKVVFEHITTAEAARLVLEAGDNVAATVTPQHLLLNRNDLLVGGVRPHHFCLPVLKRETHRQALVAAVTGEKAHKFFLGTDSAPHAKSAKENACGCAGMFSAMTAVELYAEVFEKAGALDKLEAFASKNGARFYGIPENAGTITLVKQSQTVPASVPYGDGELVPMRAGGEIGWTVQY</sequence>
<feature type="chain" id="PRO_1000078099" description="Dihydroorotase">
    <location>
        <begin position="1"/>
        <end position="344"/>
    </location>
</feature>
<feature type="active site" evidence="1">
    <location>
        <position position="247"/>
    </location>
</feature>
<feature type="binding site" evidence="1">
    <location>
        <position position="13"/>
    </location>
    <ligand>
        <name>Zn(2+)</name>
        <dbReference type="ChEBI" id="CHEBI:29105"/>
        <label>1</label>
    </ligand>
</feature>
<feature type="binding site" evidence="1">
    <location>
        <begin position="15"/>
        <end position="17"/>
    </location>
    <ligand>
        <name>substrate</name>
    </ligand>
</feature>
<feature type="binding site" evidence="1">
    <location>
        <position position="15"/>
    </location>
    <ligand>
        <name>Zn(2+)</name>
        <dbReference type="ChEBI" id="CHEBI:29105"/>
        <label>1</label>
    </ligand>
</feature>
<feature type="binding site" evidence="1">
    <location>
        <position position="41"/>
    </location>
    <ligand>
        <name>substrate</name>
    </ligand>
</feature>
<feature type="binding site" description="via carbamate group" evidence="1">
    <location>
        <position position="98"/>
    </location>
    <ligand>
        <name>Zn(2+)</name>
        <dbReference type="ChEBI" id="CHEBI:29105"/>
        <label>1</label>
    </ligand>
</feature>
<feature type="binding site" description="via carbamate group" evidence="1">
    <location>
        <position position="98"/>
    </location>
    <ligand>
        <name>Zn(2+)</name>
        <dbReference type="ChEBI" id="CHEBI:29105"/>
        <label>2</label>
    </ligand>
</feature>
<feature type="binding site" evidence="1">
    <location>
        <position position="135"/>
    </location>
    <ligand>
        <name>substrate</name>
    </ligand>
</feature>
<feature type="binding site" evidence="1">
    <location>
        <position position="135"/>
    </location>
    <ligand>
        <name>Zn(2+)</name>
        <dbReference type="ChEBI" id="CHEBI:29105"/>
        <label>2</label>
    </ligand>
</feature>
<feature type="binding site" evidence="1">
    <location>
        <position position="173"/>
    </location>
    <ligand>
        <name>Zn(2+)</name>
        <dbReference type="ChEBI" id="CHEBI:29105"/>
        <label>2</label>
    </ligand>
</feature>
<feature type="binding site" evidence="1">
    <location>
        <position position="218"/>
    </location>
    <ligand>
        <name>substrate</name>
    </ligand>
</feature>
<feature type="binding site" evidence="1">
    <location>
        <position position="247"/>
    </location>
    <ligand>
        <name>Zn(2+)</name>
        <dbReference type="ChEBI" id="CHEBI:29105"/>
        <label>1</label>
    </ligand>
</feature>
<feature type="binding site" evidence="1">
    <location>
        <position position="251"/>
    </location>
    <ligand>
        <name>substrate</name>
    </ligand>
</feature>
<feature type="binding site" evidence="1">
    <location>
        <position position="263"/>
    </location>
    <ligand>
        <name>substrate</name>
    </ligand>
</feature>
<feature type="modified residue" description="N6-carboxylysine" evidence="1">
    <location>
        <position position="98"/>
    </location>
</feature>